<reference key="1">
    <citation type="journal article" date="2007" name="PLoS ONE">
        <title>Paradoxical DNA repair and peroxide resistance gene conservation in Bacillus pumilus SAFR-032.</title>
        <authorList>
            <person name="Gioia J."/>
            <person name="Yerrapragada S."/>
            <person name="Qin X."/>
            <person name="Jiang H."/>
            <person name="Igboeli O.C."/>
            <person name="Muzny D."/>
            <person name="Dugan-Rocha S."/>
            <person name="Ding Y."/>
            <person name="Hawes A."/>
            <person name="Liu W."/>
            <person name="Perez L."/>
            <person name="Kovar C."/>
            <person name="Dinh H."/>
            <person name="Lee S."/>
            <person name="Nazareth L."/>
            <person name="Blyth P."/>
            <person name="Holder M."/>
            <person name="Buhay C."/>
            <person name="Tirumalai M.R."/>
            <person name="Liu Y."/>
            <person name="Dasgupta I."/>
            <person name="Bokhetache L."/>
            <person name="Fujita M."/>
            <person name="Karouia F."/>
            <person name="Eswara Moorthy P."/>
            <person name="Siefert J."/>
            <person name="Uzman A."/>
            <person name="Buzumbo P."/>
            <person name="Verma A."/>
            <person name="Zwiya H."/>
            <person name="McWilliams B.D."/>
            <person name="Olowu A."/>
            <person name="Clinkenbeard K.D."/>
            <person name="Newcombe D."/>
            <person name="Golebiewski L."/>
            <person name="Petrosino J.F."/>
            <person name="Nicholson W.L."/>
            <person name="Fox G.E."/>
            <person name="Venkateswaran K."/>
            <person name="Highlander S.K."/>
            <person name="Weinstock G.M."/>
        </authorList>
    </citation>
    <scope>NUCLEOTIDE SEQUENCE [LARGE SCALE GENOMIC DNA]</scope>
    <source>
        <strain>SAFR-032</strain>
    </source>
</reference>
<evidence type="ECO:0000255" key="1">
    <source>
        <dbReference type="HAMAP-Rule" id="MF_01677"/>
    </source>
</evidence>
<dbReference type="EC" id="4.2.1.109" evidence="1"/>
<dbReference type="EMBL" id="CP000813">
    <property type="protein sequence ID" value="ABV61937.1"/>
    <property type="molecule type" value="Genomic_DNA"/>
</dbReference>
<dbReference type="RefSeq" id="WP_012009737.1">
    <property type="nucleotide sequence ID" value="NC_009848.4"/>
</dbReference>
<dbReference type="SMR" id="A8FCH0"/>
<dbReference type="STRING" id="315750.BPUM_1254"/>
<dbReference type="GeneID" id="5620517"/>
<dbReference type="KEGG" id="bpu:BPUM_1254"/>
<dbReference type="eggNOG" id="COG0235">
    <property type="taxonomic scope" value="Bacteria"/>
</dbReference>
<dbReference type="HOGENOM" id="CLU_006033_4_1_9"/>
<dbReference type="OrthoDB" id="9805559at2"/>
<dbReference type="UniPathway" id="UPA00904">
    <property type="reaction ID" value="UER00875"/>
</dbReference>
<dbReference type="Proteomes" id="UP000001355">
    <property type="component" value="Chromosome"/>
</dbReference>
<dbReference type="GO" id="GO:0005737">
    <property type="term" value="C:cytoplasm"/>
    <property type="evidence" value="ECO:0007669"/>
    <property type="project" value="InterPro"/>
</dbReference>
<dbReference type="GO" id="GO:0046570">
    <property type="term" value="F:methylthioribulose 1-phosphate dehydratase activity"/>
    <property type="evidence" value="ECO:0007669"/>
    <property type="project" value="UniProtKB-UniRule"/>
</dbReference>
<dbReference type="GO" id="GO:0008270">
    <property type="term" value="F:zinc ion binding"/>
    <property type="evidence" value="ECO:0007669"/>
    <property type="project" value="UniProtKB-UniRule"/>
</dbReference>
<dbReference type="GO" id="GO:0019509">
    <property type="term" value="P:L-methionine salvage from methylthioadenosine"/>
    <property type="evidence" value="ECO:0007669"/>
    <property type="project" value="UniProtKB-UniRule"/>
</dbReference>
<dbReference type="Gene3D" id="3.40.225.10">
    <property type="entry name" value="Class II aldolase/adducin N-terminal domain"/>
    <property type="match status" value="1"/>
</dbReference>
<dbReference type="HAMAP" id="MF_01677">
    <property type="entry name" value="Salvage_MtnB"/>
    <property type="match status" value="1"/>
</dbReference>
<dbReference type="InterPro" id="IPR001303">
    <property type="entry name" value="Aldolase_II/adducin_N"/>
</dbReference>
<dbReference type="InterPro" id="IPR036409">
    <property type="entry name" value="Aldolase_II/adducin_N_sf"/>
</dbReference>
<dbReference type="InterPro" id="IPR017714">
    <property type="entry name" value="MethylthioRu-1-P_deHdtase_MtnB"/>
</dbReference>
<dbReference type="NCBIfam" id="NF005244">
    <property type="entry name" value="PRK06754.1"/>
    <property type="match status" value="1"/>
</dbReference>
<dbReference type="NCBIfam" id="TIGR03328">
    <property type="entry name" value="salvage_mtnB"/>
    <property type="match status" value="1"/>
</dbReference>
<dbReference type="PANTHER" id="PTHR10640">
    <property type="entry name" value="METHYLTHIORIBULOSE-1-PHOSPHATE DEHYDRATASE"/>
    <property type="match status" value="1"/>
</dbReference>
<dbReference type="PANTHER" id="PTHR10640:SF7">
    <property type="entry name" value="METHYLTHIORIBULOSE-1-PHOSPHATE DEHYDRATASE"/>
    <property type="match status" value="1"/>
</dbReference>
<dbReference type="Pfam" id="PF00596">
    <property type="entry name" value="Aldolase_II"/>
    <property type="match status" value="1"/>
</dbReference>
<dbReference type="SMART" id="SM01007">
    <property type="entry name" value="Aldolase_II"/>
    <property type="match status" value="1"/>
</dbReference>
<dbReference type="SUPFAM" id="SSF53639">
    <property type="entry name" value="AraD/HMP-PK domain-like"/>
    <property type="match status" value="1"/>
</dbReference>
<proteinExistence type="inferred from homology"/>
<name>MTNB_BACP2</name>
<feature type="chain" id="PRO_0000357068" description="Methylthioribulose-1-phosphate dehydratase">
    <location>
        <begin position="1"/>
        <end position="212"/>
    </location>
</feature>
<feature type="binding site" evidence="1">
    <location>
        <position position="99"/>
    </location>
    <ligand>
        <name>Zn(2+)</name>
        <dbReference type="ChEBI" id="CHEBI:29105"/>
    </ligand>
</feature>
<feature type="binding site" evidence="1">
    <location>
        <position position="101"/>
    </location>
    <ligand>
        <name>Zn(2+)</name>
        <dbReference type="ChEBI" id="CHEBI:29105"/>
    </ligand>
</feature>
<organism>
    <name type="scientific">Bacillus pumilus (strain SAFR-032)</name>
    <dbReference type="NCBI Taxonomy" id="315750"/>
    <lineage>
        <taxon>Bacteria</taxon>
        <taxon>Bacillati</taxon>
        <taxon>Bacillota</taxon>
        <taxon>Bacilli</taxon>
        <taxon>Bacillales</taxon>
        <taxon>Bacillaceae</taxon>
        <taxon>Bacillus</taxon>
    </lineage>
</organism>
<sequence length="212" mass="23997">MADEKNKRWQELADVKRELAQRDWFYGTSGNLSIKVSDDPITFLVTASGKDKRKETDEDFVLVNAAGNPVDPDVPLRPSAETQLHTYVYERTNAGCCLHVHTIDNNVISELYGDKGEIRFKGNEIIKALGYWEEDAEVSLPIIENPAHIPHLAAQFAKHLTEESESGAVLIRNHGITVWGKTASEAKRVLEAYEFLFSYYLKLTLYQKQLVT</sequence>
<comment type="function">
    <text evidence="1">Catalyzes the dehydration of methylthioribulose-1-phosphate (MTRu-1-P) into 2,3-diketo-5-methylthiopentyl-1-phosphate (DK-MTP-1-P).</text>
</comment>
<comment type="catalytic activity">
    <reaction evidence="1">
        <text>5-(methylsulfanyl)-D-ribulose 1-phosphate = 5-methylsulfanyl-2,3-dioxopentyl phosphate + H2O</text>
        <dbReference type="Rhea" id="RHEA:15549"/>
        <dbReference type="ChEBI" id="CHEBI:15377"/>
        <dbReference type="ChEBI" id="CHEBI:58548"/>
        <dbReference type="ChEBI" id="CHEBI:58828"/>
        <dbReference type="EC" id="4.2.1.109"/>
    </reaction>
</comment>
<comment type="cofactor">
    <cofactor evidence="1">
        <name>Zn(2+)</name>
        <dbReference type="ChEBI" id="CHEBI:29105"/>
    </cofactor>
    <text evidence="1">Binds 1 zinc ion per subunit.</text>
</comment>
<comment type="pathway">
    <text evidence="1">Amino-acid biosynthesis; L-methionine biosynthesis via salvage pathway; L-methionine from S-methyl-5-thio-alpha-D-ribose 1-phosphate: step 2/6.</text>
</comment>
<comment type="subunit">
    <text evidence="1">Homotetramer.</text>
</comment>
<comment type="similarity">
    <text evidence="1">Belongs to the aldolase class II family. MtnB subfamily.</text>
</comment>
<keyword id="KW-0028">Amino-acid biosynthesis</keyword>
<keyword id="KW-0456">Lyase</keyword>
<keyword id="KW-0479">Metal-binding</keyword>
<keyword id="KW-0486">Methionine biosynthesis</keyword>
<keyword id="KW-0862">Zinc</keyword>
<protein>
    <recommendedName>
        <fullName evidence="1">Methylthioribulose-1-phosphate dehydratase</fullName>
        <shortName evidence="1">MTRu-1-P dehydratase</shortName>
        <ecNumber evidence="1">4.2.1.109</ecNumber>
    </recommendedName>
</protein>
<accession>A8FCH0</accession>
<gene>
    <name evidence="1" type="primary">mtnB</name>
    <name type="ordered locus">BPUM_1254</name>
</gene>